<keyword id="KW-0044">Antibiotic</keyword>
<keyword id="KW-0929">Antimicrobial</keyword>
<keyword id="KW-0078">Bacteriocin</keyword>
<keyword id="KW-0903">Direct protein sequencing</keyword>
<keyword id="KW-0425">Lantibiotic</keyword>
<keyword id="KW-0614">Plasmid</keyword>
<keyword id="KW-0964">Secreted</keyword>
<keyword id="KW-0883">Thioether bond</keyword>
<accession>O87237</accession>
<proteinExistence type="evidence at protein level"/>
<comment type="function">
    <text evidence="1 2">Lanthionine-containing peptide antibiotic (lantibiotic) active on Gram-positive bacteria. The bactericidal activity of lantibiotics is based on depolarization of energized bacterial cytoplasmic membranes, initiated by the formation of aqueous transmembrane pores. When present individually lacticin 3147 A2 exhibits weak activity towards L.lactis strain AM2 and L.lactis strain HP, and no activity towards L.lactis strain IFPL359, but when combined with lacticin 3147 A1 it displays strong activity towards all three strains.</text>
</comment>
<comment type="subcellular location">
    <subcellularLocation>
        <location evidence="1 2">Secreted</location>
    </subcellularLocation>
</comment>
<comment type="PTM">
    <text evidence="3">Maturation of lantibiotics involves the enzymatic conversion of Thr, and Ser into dehydrated AA and the formation of thioether bonds with cysteine. This is followed by membrane translocation and cleavage of the modified precursor.</text>
</comment>
<comment type="PTM">
    <text>It is not established whether the 2,3-didehydrobutyrines are the E- or Z-isomers (PubMed:10608807, PubMed:15023056). In the NMR model they were assumed to be the Z-isomer.</text>
</comment>
<comment type="mass spectrometry"/>
<comment type="mass spectrometry"/>
<comment type="mass spectrometry"/>
<feature type="propeptide" id="PRO_0000042851" evidence="3">
    <location>
        <begin position="1"/>
        <end position="36"/>
    </location>
</feature>
<feature type="peptide" id="PRO_0000042852" description="Lantibiotic lacticin 3147 A2" evidence="3">
    <location>
        <begin position="37"/>
        <end position="65"/>
    </location>
</feature>
<feature type="modified residue" description="2-oxobutanoic acid" evidence="3">
    <location>
        <position position="37"/>
    </location>
</feature>
<feature type="modified residue" description="2,3-didehydrobutyrine" evidence="3">
    <location>
        <position position="38"/>
    </location>
</feature>
<feature type="modified residue" description="2,3-didehydrobutyrine" evidence="3">
    <location>
        <position position="41"/>
    </location>
</feature>
<feature type="modified residue" description="2,3-didehydroalanine (Ser)" evidence="3">
    <location>
        <position position="45"/>
    </location>
</feature>
<feature type="modified residue" description="2,3-didehydroalanine (Ser)" evidence="3">
    <location>
        <position position="48"/>
    </location>
</feature>
<feature type="cross-link" description="Lanthionine (Ser-Cys)" evidence="3">
    <location>
        <begin position="52"/>
        <end position="56"/>
    </location>
</feature>
<feature type="cross-link" description="Beta-methyllanthionine (Thr-Cys)" evidence="3">
    <location>
        <begin position="58"/>
        <end position="61"/>
    </location>
</feature>
<feature type="cross-link" description="Beta-methyllanthionine (Thr-Cys)" evidence="3">
    <location>
        <begin position="62"/>
        <end position="65"/>
    </location>
</feature>
<organism>
    <name type="scientific">Lactococcus lactis subsp. lactis</name>
    <name type="common">Streptococcus lactis</name>
    <dbReference type="NCBI Taxonomy" id="1360"/>
    <lineage>
        <taxon>Bacteria</taxon>
        <taxon>Bacillati</taxon>
        <taxon>Bacillota</taxon>
        <taxon>Bacilli</taxon>
        <taxon>Lactobacillales</taxon>
        <taxon>Streptococcaceae</taxon>
        <taxon>Lactococcus</taxon>
    </lineage>
</organism>
<gene>
    <name evidence="4" type="primary">ltnA2</name>
    <name evidence="7" type="synonym">ltnB</name>
    <name type="ORF">ORF00036</name>
</gene>
<sequence>MKEKNMKKNDTIELQLGKYLEDDMIELAEGDESHGGTTPATPAISILSAYISTNTCPTTKCTRAC</sequence>
<reference evidence="6" key="1">
    <citation type="journal article" date="1998" name="Mol. Microbiol.">
        <title>Sequence and analysis of the 60 kb conjugative, bacteriocin-producing plasmid pMRC01 from Lactococcus lactis DPC3147.</title>
        <authorList>
            <person name="Dougherty B.A."/>
            <person name="Hill C."/>
            <person name="Weidman J.F."/>
            <person name="Richardson D.R."/>
            <person name="Venter J.C."/>
            <person name="Ross R.P."/>
        </authorList>
    </citation>
    <scope>NUCLEOTIDE SEQUENCE [GENOMIC DNA]</scope>
    <source>
        <strain evidence="6">DPC3147</strain>
        <plasmid>pMRC01</plasmid>
    </source>
</reference>
<reference evidence="5 7" key="2">
    <citation type="journal article" date="2000" name="J. Appl. Microbiol.">
        <title>Biological and molecular characterization of a two-peptide lantibiotic produced by Lactococcus lactis IFPL105.</title>
        <authorList>
            <person name="Martinez-Cuesta M.C."/>
            <person name="Buist G."/>
            <person name="Kok J."/>
            <person name="Hauge H.H."/>
            <person name="Nissen-Meyer J."/>
            <person name="Pelaez C."/>
            <person name="Requena T."/>
        </authorList>
    </citation>
    <scope>NUCLEOTIDE SEQUENCE [GENOMIC DNA]</scope>
    <scope>PROTEIN SEQUENCE OF 51-57</scope>
    <scope>FUNCTION</scope>
    <scope>SUBCELLULAR LOCATION</scope>
    <scope>MASS SPECTROMETRY</scope>
    <source>
        <strain evidence="7">IFPL105</strain>
        <plasmid>pBAC105</plasmid>
    </source>
</reference>
<reference evidence="5" key="3">
    <citation type="journal article" date="2004" name="Biochemistry">
        <title>Structural characterization of lacticin 3147, a two-peptide lantibiotic with synergistic activity.</title>
        <authorList>
            <person name="Martin N.I."/>
            <person name="Sprules T."/>
            <person name="Carpenter M.R."/>
            <person name="Cotter P.D."/>
            <person name="Hill C."/>
            <person name="Ross R.P."/>
            <person name="Vederas J.C."/>
        </authorList>
    </citation>
    <scope>PROTEIN SEQUENCE OF 37-65</scope>
    <scope>MASS SPECTROMETRY</scope>
    <scope>THIOETHER BONDS</scope>
    <scope>DEHYDRATION AT THR-38; THR-41; SER-45 AND SER-48</scope>
    <source>
        <strain evidence="3">DPC3147</strain>
    </source>
</reference>
<reference evidence="5" key="4">
    <citation type="journal article" date="1999" name="J. Biol. Chem.">
        <title>Extensive post-translational modification, including serine to D-alanine conversion, in the two-component lantibiotic, lacticin 3147.</title>
        <authorList>
            <person name="Ryan M.P."/>
            <person name="Jack R.W."/>
            <person name="Josten M."/>
            <person name="Sahl H.-G."/>
            <person name="Jung G."/>
            <person name="Ross R.P."/>
            <person name="Hill C."/>
        </authorList>
    </citation>
    <scope>FUNCTION</scope>
    <scope>SUBCELLULAR LOCATION</scope>
    <scope>MASS SPECTROMETRY</scope>
    <source>
        <strain evidence="1">DPC3147</strain>
    </source>
</reference>
<dbReference type="EMBL" id="AE001272">
    <property type="protein sequence ID" value="AAC56054.1"/>
    <property type="molecule type" value="Genomic_DNA"/>
</dbReference>
<dbReference type="EMBL" id="AF167432">
    <property type="protein sequence ID" value="AAF32257.1"/>
    <property type="molecule type" value="Genomic_DNA"/>
</dbReference>
<dbReference type="PIR" id="T43107">
    <property type="entry name" value="T43107"/>
</dbReference>
<dbReference type="RefSeq" id="NP_047320.1">
    <property type="nucleotide sequence ID" value="NC_001949.1"/>
</dbReference>
<dbReference type="TCDB" id="1.C.21.2.4">
    <property type="family name" value="the lacticin 481 (lacticin 481) family"/>
</dbReference>
<dbReference type="GO" id="GO:0005576">
    <property type="term" value="C:extracellular region"/>
    <property type="evidence" value="ECO:0000314"/>
    <property type="project" value="UniProtKB"/>
</dbReference>
<dbReference type="GO" id="GO:0005102">
    <property type="term" value="F:signaling receptor binding"/>
    <property type="evidence" value="ECO:0007669"/>
    <property type="project" value="UniProtKB-KW"/>
</dbReference>
<dbReference type="GO" id="GO:0050830">
    <property type="term" value="P:defense response to Gram-positive bacterium"/>
    <property type="evidence" value="ECO:0000314"/>
    <property type="project" value="UniProtKB"/>
</dbReference>
<dbReference type="GO" id="GO:0031640">
    <property type="term" value="P:killing of cells of another organism"/>
    <property type="evidence" value="ECO:0007669"/>
    <property type="project" value="UniProtKB-KW"/>
</dbReference>
<dbReference type="NCBIfam" id="NF038161">
    <property type="entry name" value="lant_II_LchA2"/>
    <property type="match status" value="1"/>
</dbReference>
<name>LANA2_LACLL</name>
<protein>
    <recommendedName>
        <fullName>Lantibiotic lacticin 3147 A2</fullName>
    </recommendedName>
</protein>
<geneLocation type="plasmid" evidence="6">
    <name>pMRC01</name>
</geneLocation>
<geneLocation type="plasmid" evidence="7">
    <name>pBAC105</name>
</geneLocation>
<evidence type="ECO:0000269" key="1">
    <source>
    </source>
</evidence>
<evidence type="ECO:0000269" key="2">
    <source>
    </source>
</evidence>
<evidence type="ECO:0000269" key="3">
    <source>
    </source>
</evidence>
<evidence type="ECO:0000303" key="4">
    <source>
    </source>
</evidence>
<evidence type="ECO:0000305" key="5"/>
<evidence type="ECO:0000312" key="6">
    <source>
        <dbReference type="EMBL" id="AAC56054.1"/>
    </source>
</evidence>
<evidence type="ECO:0000312" key="7">
    <source>
        <dbReference type="EMBL" id="AAF32257.1"/>
    </source>
</evidence>